<organism>
    <name type="scientific">Legionella pneumophila (strain Corby)</name>
    <dbReference type="NCBI Taxonomy" id="400673"/>
    <lineage>
        <taxon>Bacteria</taxon>
        <taxon>Pseudomonadati</taxon>
        <taxon>Pseudomonadota</taxon>
        <taxon>Gammaproteobacteria</taxon>
        <taxon>Legionellales</taxon>
        <taxon>Legionellaceae</taxon>
        <taxon>Legionella</taxon>
    </lineage>
</organism>
<protein>
    <recommendedName>
        <fullName evidence="1">UPF0391 membrane protein LPC_1949</fullName>
    </recommendedName>
</protein>
<accession>A5IES9</accession>
<feature type="chain" id="PRO_0000314226" description="UPF0391 membrane protein LPC_1949">
    <location>
        <begin position="1"/>
        <end position="59"/>
    </location>
</feature>
<feature type="transmembrane region" description="Helical" evidence="1">
    <location>
        <begin position="5"/>
        <end position="25"/>
    </location>
</feature>
<feature type="transmembrane region" description="Helical" evidence="1">
    <location>
        <begin position="30"/>
        <end position="50"/>
    </location>
</feature>
<dbReference type="EMBL" id="CP000675">
    <property type="protein sequence ID" value="ABQ55879.1"/>
    <property type="molecule type" value="Genomic_DNA"/>
</dbReference>
<dbReference type="RefSeq" id="WP_011947442.1">
    <property type="nucleotide sequence ID" value="NZ_JAPMSS010000007.1"/>
</dbReference>
<dbReference type="KEGG" id="lpc:LPC_1949"/>
<dbReference type="HOGENOM" id="CLU_187346_1_0_6"/>
<dbReference type="GO" id="GO:0005886">
    <property type="term" value="C:plasma membrane"/>
    <property type="evidence" value="ECO:0007669"/>
    <property type="project" value="UniProtKB-SubCell"/>
</dbReference>
<dbReference type="HAMAP" id="MF_01361">
    <property type="entry name" value="UPF0391"/>
    <property type="match status" value="1"/>
</dbReference>
<dbReference type="InterPro" id="IPR009760">
    <property type="entry name" value="DUF1328"/>
</dbReference>
<dbReference type="NCBIfam" id="NF010226">
    <property type="entry name" value="PRK13682.1-1"/>
    <property type="match status" value="1"/>
</dbReference>
<dbReference type="NCBIfam" id="NF010229">
    <property type="entry name" value="PRK13682.1-4"/>
    <property type="match status" value="1"/>
</dbReference>
<dbReference type="NCBIfam" id="NF010233">
    <property type="entry name" value="PRK13682.2-4"/>
    <property type="match status" value="1"/>
</dbReference>
<dbReference type="Pfam" id="PF07043">
    <property type="entry name" value="DUF1328"/>
    <property type="match status" value="1"/>
</dbReference>
<dbReference type="PIRSF" id="PIRSF036466">
    <property type="entry name" value="UCP036466"/>
    <property type="match status" value="1"/>
</dbReference>
<reference key="1">
    <citation type="submission" date="2006-11" db="EMBL/GenBank/DDBJ databases">
        <title>Identification and characterization of a new conjugation/ type IVA secretion system (trb/tra) of L. pneumophila Corby localized on a mobile genomic island.</title>
        <authorList>
            <person name="Gloeckner G."/>
            <person name="Albert-Weissenberger C."/>
            <person name="Weinmann E."/>
            <person name="Jacobi S."/>
            <person name="Schunder E."/>
            <person name="Steinert M."/>
            <person name="Buchrieser C."/>
            <person name="Hacker J."/>
            <person name="Heuner K."/>
        </authorList>
    </citation>
    <scope>NUCLEOTIDE SEQUENCE [LARGE SCALE GENOMIC DNA]</scope>
    <source>
        <strain>Corby</strain>
    </source>
</reference>
<name>Y1949_LEGPC</name>
<gene>
    <name type="ordered locus">LPC_1949</name>
</gene>
<evidence type="ECO:0000255" key="1">
    <source>
        <dbReference type="HAMAP-Rule" id="MF_01361"/>
    </source>
</evidence>
<sequence>MLTWALIFFIIAIIAAAFGFGGIAVAAAGIAKILFFLFLVMFVIFLIMGLLGRRGPPPV</sequence>
<proteinExistence type="inferred from homology"/>
<keyword id="KW-1003">Cell membrane</keyword>
<keyword id="KW-0472">Membrane</keyword>
<keyword id="KW-0812">Transmembrane</keyword>
<keyword id="KW-1133">Transmembrane helix</keyword>
<comment type="subcellular location">
    <subcellularLocation>
        <location evidence="1">Cell membrane</location>
        <topology evidence="1">Multi-pass membrane protein</topology>
    </subcellularLocation>
</comment>
<comment type="similarity">
    <text evidence="1">Belongs to the UPF0391 family.</text>
</comment>